<geneLocation type="chloroplast"/>
<protein>
    <recommendedName>
        <fullName evidence="1">Large ribosomal subunit protein bL32c</fullName>
    </recommendedName>
    <alternativeName>
        <fullName evidence="2">50S ribosomal protein L32, chloroplastic</fullName>
    </alternativeName>
</protein>
<organism>
    <name type="scientific">Eucalyptus globulus subsp. globulus</name>
    <name type="common">Tasmanian blue gum</name>
    <dbReference type="NCBI Taxonomy" id="71271"/>
    <lineage>
        <taxon>Eukaryota</taxon>
        <taxon>Viridiplantae</taxon>
        <taxon>Streptophyta</taxon>
        <taxon>Embryophyta</taxon>
        <taxon>Tracheophyta</taxon>
        <taxon>Spermatophyta</taxon>
        <taxon>Magnoliopsida</taxon>
        <taxon>eudicotyledons</taxon>
        <taxon>Gunneridae</taxon>
        <taxon>Pentapetalae</taxon>
        <taxon>rosids</taxon>
        <taxon>malvids</taxon>
        <taxon>Myrtales</taxon>
        <taxon>Myrtaceae</taxon>
        <taxon>Myrtoideae</taxon>
        <taxon>Eucalypteae</taxon>
        <taxon>Eucalyptus</taxon>
    </lineage>
</organism>
<reference key="1">
    <citation type="journal article" date="2005" name="DNA Res.">
        <title>Complete nucleotide sequence of the chloroplast genome from the Tasmanian blue gum, Eucalyptus globulus (Myrtaceae).</title>
        <authorList>
            <person name="Steane D.A."/>
        </authorList>
    </citation>
    <scope>NUCLEOTIDE SEQUENCE [LARGE SCALE GENOMIC DNA]</scope>
</reference>
<keyword id="KW-0150">Chloroplast</keyword>
<keyword id="KW-0934">Plastid</keyword>
<keyword id="KW-0687">Ribonucleoprotein</keyword>
<keyword id="KW-0689">Ribosomal protein</keyword>
<feature type="chain" id="PRO_0000276468" description="Large ribosomal subunit protein bL32c">
    <location>
        <begin position="1"/>
        <end position="52"/>
    </location>
</feature>
<proteinExistence type="inferred from homology"/>
<sequence length="52" mass="5879">MAVPKKSTSISKKRIRKNIWKKKVYRAALKAFSLAKSLSTGNSKSFFCTTIK</sequence>
<gene>
    <name evidence="1" type="primary">rpl32</name>
</gene>
<comment type="subcellular location">
    <subcellularLocation>
        <location>Plastid</location>
        <location>Chloroplast</location>
    </subcellularLocation>
</comment>
<comment type="similarity">
    <text evidence="1">Belongs to the bacterial ribosomal protein bL32 family.</text>
</comment>
<evidence type="ECO:0000255" key="1">
    <source>
        <dbReference type="HAMAP-Rule" id="MF_00340"/>
    </source>
</evidence>
<evidence type="ECO:0000305" key="2"/>
<dbReference type="EMBL" id="AY780259">
    <property type="protein sequence ID" value="AAX21076.1"/>
    <property type="molecule type" value="Genomic_DNA"/>
</dbReference>
<dbReference type="RefSeq" id="YP_636347.1">
    <property type="nucleotide sequence ID" value="NC_008115.1"/>
</dbReference>
<dbReference type="SMR" id="Q49KV0"/>
<dbReference type="GeneID" id="4108378"/>
<dbReference type="GO" id="GO:0009507">
    <property type="term" value="C:chloroplast"/>
    <property type="evidence" value="ECO:0007669"/>
    <property type="project" value="UniProtKB-SubCell"/>
</dbReference>
<dbReference type="GO" id="GO:0015934">
    <property type="term" value="C:large ribosomal subunit"/>
    <property type="evidence" value="ECO:0007669"/>
    <property type="project" value="InterPro"/>
</dbReference>
<dbReference type="GO" id="GO:0003735">
    <property type="term" value="F:structural constituent of ribosome"/>
    <property type="evidence" value="ECO:0007669"/>
    <property type="project" value="InterPro"/>
</dbReference>
<dbReference type="GO" id="GO:0006412">
    <property type="term" value="P:translation"/>
    <property type="evidence" value="ECO:0007669"/>
    <property type="project" value="UniProtKB-UniRule"/>
</dbReference>
<dbReference type="HAMAP" id="MF_00340">
    <property type="entry name" value="Ribosomal_bL32"/>
    <property type="match status" value="1"/>
</dbReference>
<dbReference type="InterPro" id="IPR002677">
    <property type="entry name" value="Ribosomal_bL32"/>
</dbReference>
<dbReference type="InterPro" id="IPR044958">
    <property type="entry name" value="Ribosomal_bL32_plant/cyanobact"/>
</dbReference>
<dbReference type="PANTHER" id="PTHR36083">
    <property type="entry name" value="50S RIBOSOMAL PROTEIN L32, CHLOROPLASTIC"/>
    <property type="match status" value="1"/>
</dbReference>
<dbReference type="PANTHER" id="PTHR36083:SF1">
    <property type="entry name" value="LARGE RIBOSOMAL SUBUNIT PROTEIN BL32C"/>
    <property type="match status" value="1"/>
</dbReference>
<accession>Q49KV0</accession>
<name>RK32_EUCGG</name>